<accession>Q63VS9</accession>
<sequence length="242" mass="26122">MAGHSKWANIKHKKAAADAKRGKIWTRLIKEIQVAARLGGGDVNSNPRLRLAVDKAADANMPKDNVKRAIDRGVGGADGANYEEIRYEGYGIGGAAIIVDTLTDNRTRTVAEVRHAFSKFGGNMGTDGSVAFMFDHVGQFLFAPGTSEDALMEAALEAGANDVNTNDDGSIEVLCDWQEFSKVKDALEAAGFKAELAEVTMKPQNEVDFTGEDAVKMQKLLDALENLDDVQEVYTNAVVVEE</sequence>
<evidence type="ECO:0000255" key="1">
    <source>
        <dbReference type="HAMAP-Rule" id="MF_00693"/>
    </source>
</evidence>
<gene>
    <name type="ordered locus">BPSL1165</name>
</gene>
<organism>
    <name type="scientific">Burkholderia pseudomallei (strain K96243)</name>
    <dbReference type="NCBI Taxonomy" id="272560"/>
    <lineage>
        <taxon>Bacteria</taxon>
        <taxon>Pseudomonadati</taxon>
        <taxon>Pseudomonadota</taxon>
        <taxon>Betaproteobacteria</taxon>
        <taxon>Burkholderiales</taxon>
        <taxon>Burkholderiaceae</taxon>
        <taxon>Burkholderia</taxon>
        <taxon>pseudomallei group</taxon>
    </lineage>
</organism>
<comment type="subcellular location">
    <subcellularLocation>
        <location evidence="1">Cytoplasm</location>
    </subcellularLocation>
</comment>
<comment type="similarity">
    <text evidence="1">Belongs to the TACO1 family.</text>
</comment>
<name>Y1165_BURPS</name>
<dbReference type="EMBL" id="BX571965">
    <property type="protein sequence ID" value="CAH35160.1"/>
    <property type="molecule type" value="Genomic_DNA"/>
</dbReference>
<dbReference type="RefSeq" id="WP_004185607.1">
    <property type="nucleotide sequence ID" value="NZ_CP009538.1"/>
</dbReference>
<dbReference type="RefSeq" id="YP_107787.1">
    <property type="nucleotide sequence ID" value="NC_006350.1"/>
</dbReference>
<dbReference type="SMR" id="Q63VS9"/>
<dbReference type="STRING" id="272560.BPSL1165"/>
<dbReference type="KEGG" id="bps:BPSL1165"/>
<dbReference type="PATRIC" id="fig|272560.51.peg.373"/>
<dbReference type="eggNOG" id="COG0217">
    <property type="taxonomic scope" value="Bacteria"/>
</dbReference>
<dbReference type="Proteomes" id="UP000000605">
    <property type="component" value="Chromosome 1"/>
</dbReference>
<dbReference type="GO" id="GO:0005829">
    <property type="term" value="C:cytosol"/>
    <property type="evidence" value="ECO:0007669"/>
    <property type="project" value="TreeGrafter"/>
</dbReference>
<dbReference type="GO" id="GO:0003677">
    <property type="term" value="F:DNA binding"/>
    <property type="evidence" value="ECO:0007669"/>
    <property type="project" value="UniProtKB-UniRule"/>
</dbReference>
<dbReference type="GO" id="GO:0006355">
    <property type="term" value="P:regulation of DNA-templated transcription"/>
    <property type="evidence" value="ECO:0007669"/>
    <property type="project" value="UniProtKB-UniRule"/>
</dbReference>
<dbReference type="FunFam" id="1.10.10.200:FF:000001">
    <property type="entry name" value="Probable transcriptional regulatory protein YebC"/>
    <property type="match status" value="1"/>
</dbReference>
<dbReference type="FunFam" id="3.30.70.980:FF:000002">
    <property type="entry name" value="Probable transcriptional regulatory protein YebC"/>
    <property type="match status" value="1"/>
</dbReference>
<dbReference type="Gene3D" id="1.10.10.200">
    <property type="match status" value="1"/>
</dbReference>
<dbReference type="Gene3D" id="3.30.70.980">
    <property type="match status" value="2"/>
</dbReference>
<dbReference type="HAMAP" id="MF_00693">
    <property type="entry name" value="Transcrip_reg_TACO1"/>
    <property type="match status" value="1"/>
</dbReference>
<dbReference type="InterPro" id="IPR017856">
    <property type="entry name" value="Integrase-like_N"/>
</dbReference>
<dbReference type="InterPro" id="IPR048300">
    <property type="entry name" value="TACO1_YebC-like_2nd/3rd_dom"/>
</dbReference>
<dbReference type="InterPro" id="IPR049083">
    <property type="entry name" value="TACO1_YebC_N"/>
</dbReference>
<dbReference type="InterPro" id="IPR002876">
    <property type="entry name" value="Transcrip_reg_TACO1-like"/>
</dbReference>
<dbReference type="InterPro" id="IPR026564">
    <property type="entry name" value="Transcrip_reg_TACO1-like_dom3"/>
</dbReference>
<dbReference type="InterPro" id="IPR029072">
    <property type="entry name" value="YebC-like"/>
</dbReference>
<dbReference type="NCBIfam" id="NF001030">
    <property type="entry name" value="PRK00110.1"/>
    <property type="match status" value="1"/>
</dbReference>
<dbReference type="NCBIfam" id="NF009044">
    <property type="entry name" value="PRK12378.1"/>
    <property type="match status" value="1"/>
</dbReference>
<dbReference type="NCBIfam" id="TIGR01033">
    <property type="entry name" value="YebC/PmpR family DNA-binding transcriptional regulator"/>
    <property type="match status" value="1"/>
</dbReference>
<dbReference type="PANTHER" id="PTHR12532:SF6">
    <property type="entry name" value="TRANSCRIPTIONAL REGULATORY PROTEIN YEBC-RELATED"/>
    <property type="match status" value="1"/>
</dbReference>
<dbReference type="PANTHER" id="PTHR12532">
    <property type="entry name" value="TRANSLATIONAL ACTIVATOR OF CYTOCHROME C OXIDASE 1"/>
    <property type="match status" value="1"/>
</dbReference>
<dbReference type="Pfam" id="PF20772">
    <property type="entry name" value="TACO1_YebC_N"/>
    <property type="match status" value="1"/>
</dbReference>
<dbReference type="Pfam" id="PF01709">
    <property type="entry name" value="Transcrip_reg"/>
    <property type="match status" value="1"/>
</dbReference>
<dbReference type="SUPFAM" id="SSF75625">
    <property type="entry name" value="YebC-like"/>
    <property type="match status" value="1"/>
</dbReference>
<keyword id="KW-0963">Cytoplasm</keyword>
<keyword id="KW-0238">DNA-binding</keyword>
<keyword id="KW-1185">Reference proteome</keyword>
<keyword id="KW-0804">Transcription</keyword>
<keyword id="KW-0805">Transcription regulation</keyword>
<reference key="1">
    <citation type="journal article" date="2004" name="Proc. Natl. Acad. Sci. U.S.A.">
        <title>Genomic plasticity of the causative agent of melioidosis, Burkholderia pseudomallei.</title>
        <authorList>
            <person name="Holden M.T.G."/>
            <person name="Titball R.W."/>
            <person name="Peacock S.J."/>
            <person name="Cerdeno-Tarraga A.-M."/>
            <person name="Atkins T."/>
            <person name="Crossman L.C."/>
            <person name="Pitt T."/>
            <person name="Churcher C."/>
            <person name="Mungall K.L."/>
            <person name="Bentley S.D."/>
            <person name="Sebaihia M."/>
            <person name="Thomson N.R."/>
            <person name="Bason N."/>
            <person name="Beacham I.R."/>
            <person name="Brooks K."/>
            <person name="Brown K.A."/>
            <person name="Brown N.F."/>
            <person name="Challis G.L."/>
            <person name="Cherevach I."/>
            <person name="Chillingworth T."/>
            <person name="Cronin A."/>
            <person name="Crossett B."/>
            <person name="Davis P."/>
            <person name="DeShazer D."/>
            <person name="Feltwell T."/>
            <person name="Fraser A."/>
            <person name="Hance Z."/>
            <person name="Hauser H."/>
            <person name="Holroyd S."/>
            <person name="Jagels K."/>
            <person name="Keith K.E."/>
            <person name="Maddison M."/>
            <person name="Moule S."/>
            <person name="Price C."/>
            <person name="Quail M.A."/>
            <person name="Rabbinowitsch E."/>
            <person name="Rutherford K."/>
            <person name="Sanders M."/>
            <person name="Simmonds M."/>
            <person name="Songsivilai S."/>
            <person name="Stevens K."/>
            <person name="Tumapa S."/>
            <person name="Vesaratchavest M."/>
            <person name="Whitehead S."/>
            <person name="Yeats C."/>
            <person name="Barrell B.G."/>
            <person name="Oyston P.C.F."/>
            <person name="Parkhill J."/>
        </authorList>
    </citation>
    <scope>NUCLEOTIDE SEQUENCE [LARGE SCALE GENOMIC DNA]</scope>
    <source>
        <strain>K96243</strain>
    </source>
</reference>
<feature type="chain" id="PRO_0000175778" description="Probable transcriptional regulatory protein BPSL1165">
    <location>
        <begin position="1"/>
        <end position="242"/>
    </location>
</feature>
<proteinExistence type="inferred from homology"/>
<protein>
    <recommendedName>
        <fullName evidence="1">Probable transcriptional regulatory protein BPSL1165</fullName>
    </recommendedName>
</protein>